<reference key="1">
    <citation type="journal article" date="1998" name="Nature">
        <title>The genome sequence of Rickettsia prowazekii and the origin of mitochondria.</title>
        <authorList>
            <person name="Andersson S.G.E."/>
            <person name="Zomorodipour A."/>
            <person name="Andersson J.O."/>
            <person name="Sicheritz-Ponten T."/>
            <person name="Alsmark U.C.M."/>
            <person name="Podowski R.M."/>
            <person name="Naeslund A.K."/>
            <person name="Eriksson A.-S."/>
            <person name="Winkler H.H."/>
            <person name="Kurland C.G."/>
        </authorList>
    </citation>
    <scope>NUCLEOTIDE SEQUENCE [LARGE SCALE GENOMIC DNA]</scope>
    <source>
        <strain>Madrid E</strain>
    </source>
</reference>
<reference key="2">
    <citation type="journal article" date="2002" name="Mol. Cell. Proteomics">
        <title>The Rickettsia prowazekii invasion gene homolog (invA) encodes a Nudix hydrolase active on adenosine (5')-pentaphospho-(5')-adenosine.</title>
        <authorList>
            <person name="Gaywee J."/>
            <person name="Xu W."/>
            <person name="Radulovic S."/>
            <person name="Bessman M.J."/>
            <person name="Azad A.F."/>
        </authorList>
    </citation>
    <scope>CATALYTIC ACTIVITY</scope>
    <scope>COFACTOR</scope>
    <scope>SUBUNIT</scope>
    <source>
        <strain>Madrid E</strain>
    </source>
</reference>
<dbReference type="EC" id="3.6.1.-"/>
<dbReference type="EMBL" id="AJ235271">
    <property type="protein sequence ID" value="CAA14698.1"/>
    <property type="molecule type" value="Genomic_DNA"/>
</dbReference>
<dbReference type="PIR" id="H71677">
    <property type="entry name" value="H71677"/>
</dbReference>
<dbReference type="RefSeq" id="NP_220621.1">
    <property type="nucleotide sequence ID" value="NC_000963.1"/>
</dbReference>
<dbReference type="RefSeq" id="WP_004598539.1">
    <property type="nucleotide sequence ID" value="NC_000963.1"/>
</dbReference>
<dbReference type="SMR" id="Q9ZDT9"/>
<dbReference type="STRING" id="272947.gene:17555317"/>
<dbReference type="EnsemblBacteria" id="CAA14698">
    <property type="protein sequence ID" value="CAA14698"/>
    <property type="gene ID" value="CAA14698"/>
</dbReference>
<dbReference type="KEGG" id="rpr:RP236"/>
<dbReference type="PATRIC" id="fig|272947.5.peg.243"/>
<dbReference type="eggNOG" id="COG0494">
    <property type="taxonomic scope" value="Bacteria"/>
</dbReference>
<dbReference type="HOGENOM" id="CLU_087195_3_0_5"/>
<dbReference type="OrthoDB" id="9816040at2"/>
<dbReference type="Proteomes" id="UP000002480">
    <property type="component" value="Chromosome"/>
</dbReference>
<dbReference type="GO" id="GO:0005737">
    <property type="term" value="C:cytoplasm"/>
    <property type="evidence" value="ECO:0007669"/>
    <property type="project" value="TreeGrafter"/>
</dbReference>
<dbReference type="GO" id="GO:0034353">
    <property type="term" value="F:mRNA 5'-diphosphatase activity"/>
    <property type="evidence" value="ECO:0007669"/>
    <property type="project" value="TreeGrafter"/>
</dbReference>
<dbReference type="GO" id="GO:0006402">
    <property type="term" value="P:mRNA catabolic process"/>
    <property type="evidence" value="ECO:0007669"/>
    <property type="project" value="TreeGrafter"/>
</dbReference>
<dbReference type="CDD" id="cd03671">
    <property type="entry name" value="NUDIX_Ap4A_hydrolase_plant_like"/>
    <property type="match status" value="1"/>
</dbReference>
<dbReference type="Gene3D" id="3.90.79.10">
    <property type="entry name" value="Nucleoside Triphosphate Pyrophosphohydrolase"/>
    <property type="match status" value="1"/>
</dbReference>
<dbReference type="HAMAP" id="MF_00298">
    <property type="entry name" value="Nudix_RppH"/>
    <property type="match status" value="1"/>
</dbReference>
<dbReference type="InterPro" id="IPR015797">
    <property type="entry name" value="NUDIX_hydrolase-like_dom_sf"/>
</dbReference>
<dbReference type="InterPro" id="IPR020084">
    <property type="entry name" value="NUDIX_hydrolase_CS"/>
</dbReference>
<dbReference type="InterPro" id="IPR000086">
    <property type="entry name" value="NUDIX_hydrolase_dom"/>
</dbReference>
<dbReference type="InterPro" id="IPR022927">
    <property type="entry name" value="RppH"/>
</dbReference>
<dbReference type="NCBIfam" id="NF001936">
    <property type="entry name" value="PRK00714.1-3"/>
    <property type="match status" value="1"/>
</dbReference>
<dbReference type="NCBIfam" id="NF001938">
    <property type="entry name" value="PRK00714.1-5"/>
    <property type="match status" value="1"/>
</dbReference>
<dbReference type="PANTHER" id="PTHR23114">
    <property type="entry name" value="M7GPPPN-MRNA HYDROLASE"/>
    <property type="match status" value="1"/>
</dbReference>
<dbReference type="PANTHER" id="PTHR23114:SF17">
    <property type="entry name" value="M7GPPPN-MRNA HYDROLASE"/>
    <property type="match status" value="1"/>
</dbReference>
<dbReference type="Pfam" id="PF00293">
    <property type="entry name" value="NUDIX"/>
    <property type="match status" value="1"/>
</dbReference>
<dbReference type="SUPFAM" id="SSF55811">
    <property type="entry name" value="Nudix"/>
    <property type="match status" value="1"/>
</dbReference>
<dbReference type="PROSITE" id="PS51462">
    <property type="entry name" value="NUDIX"/>
    <property type="match status" value="1"/>
</dbReference>
<dbReference type="PROSITE" id="PS00893">
    <property type="entry name" value="NUDIX_BOX"/>
    <property type="match status" value="1"/>
</dbReference>
<feature type="chain" id="PRO_0000057025" description="RNA pyrophosphohydrolase">
    <location>
        <begin position="1"/>
        <end position="161"/>
    </location>
</feature>
<feature type="domain" description="Nudix hydrolase">
    <location>
        <begin position="12"/>
        <end position="154"/>
    </location>
</feature>
<feature type="short sequence motif" description="Nudix box">
    <location>
        <begin position="46"/>
        <end position="67"/>
    </location>
</feature>
<comment type="function">
    <text evidence="1">Accelerates the degradation of transcripts by removing pyrophosphate from the 5'-end of triphosphorylated RNA, leading to a more labile monophosphorylated state that can stimulate subsequent ribonuclease cleavage (By similarity). Preferentially hydrolyzes diadenosine penta-phosphate with ATP as one of the reaction products. Also able to hydrolyze diadenosine hexa-phosphate and diguanosine penta-phosphate. Has little or no activity on diadenosine tetra- and tri-phosphate, on diguanosine tetra- and tri-phosphate, on GDP-mannose, ADP-ribose, NADH and NAD(+).</text>
</comment>
<comment type="cofactor">
    <cofactor evidence="2">
        <name>Mg(2+)</name>
        <dbReference type="ChEBI" id="CHEBI:18420"/>
    </cofactor>
    <cofactor evidence="2">
        <name>Zn(2+)</name>
        <dbReference type="ChEBI" id="CHEBI:29105"/>
    </cofactor>
    <text evidence="2">Manganese cannot be used.</text>
</comment>
<comment type="biophysicochemical properties">
    <phDependence>
        <text>Optimum pH is 8.5.</text>
    </phDependence>
</comment>
<comment type="subunit">
    <text evidence="2">Monomer.</text>
</comment>
<comment type="similarity">
    <text evidence="3">Belongs to the Nudix hydrolase family. RppH subfamily.</text>
</comment>
<accession>Q9ZDT9</accession>
<protein>
    <recommendedName>
        <fullName>RNA pyrophosphohydrolase</fullName>
        <ecNumber>3.6.1.-</ecNumber>
    </recommendedName>
    <alternativeName>
        <fullName>(Di)nucleoside pentaphosphate pyrophosphatase</fullName>
    </alternativeName>
    <alternativeName>
        <fullName>(Di)nucleoside polyphosphate hydrolase</fullName>
    </alternativeName>
    <alternativeName>
        <fullName>Ap5A pyrophosphatase</fullName>
    </alternativeName>
    <alternativeName>
        <fullName>Protein InvA</fullName>
    </alternativeName>
</protein>
<proteinExistence type="evidence at protein level"/>
<evidence type="ECO:0000250" key="1"/>
<evidence type="ECO:0000269" key="2">
    <source>
    </source>
</evidence>
<evidence type="ECO:0000305" key="3"/>
<keyword id="KW-0378">Hydrolase</keyword>
<keyword id="KW-0460">Magnesium</keyword>
<keyword id="KW-1185">Reference proteome</keyword>
<keyword id="KW-0862">Zinc</keyword>
<name>RPPH_RICPR</name>
<sequence>MRNSSNKYLDLPYRPGVGMMILNADNQIFVGKRIDTKISSWQMPQGGIVPGETPSIAAMREMLEEIGSNKGYIIAESKCWYSYDVPSFLIPKLWNGNFRGQKQRWFLIRFTGNNKDINIHTSNPEFDQWRWTSLDELLSIIIPFKRKLYQAVVKEFESLIQ</sequence>
<gene>
    <name type="primary">rppH</name>
    <name type="synonym">invA</name>
    <name type="synonym">nudH</name>
    <name type="ordered locus">RP236</name>
</gene>
<organism>
    <name type="scientific">Rickettsia prowazekii (strain Madrid E)</name>
    <dbReference type="NCBI Taxonomy" id="272947"/>
    <lineage>
        <taxon>Bacteria</taxon>
        <taxon>Pseudomonadati</taxon>
        <taxon>Pseudomonadota</taxon>
        <taxon>Alphaproteobacteria</taxon>
        <taxon>Rickettsiales</taxon>
        <taxon>Rickettsiaceae</taxon>
        <taxon>Rickettsieae</taxon>
        <taxon>Rickettsia</taxon>
        <taxon>typhus group</taxon>
    </lineage>
</organism>